<sequence length="473" mass="51894">MKTLYSLRRFYHVETLFNGTLALAGRDQETTGFAWWAGNARLINLSGKLLGAHVAHAGLIVFWAGAMNLFEVAHFVPEKPMYEQGLILLPHLATLGWGVGPGGEVIDTFPYFVSGVLHLISSAVLGFGGIYHALLGPETLEESFPFFGYVWKDRNKMTTILGIHLILLGIGAFLLVFKALYFGGVYDTWAPGGGDVRKITNLTLSPSIIFGYLLKSPFGGEGWIVSVDDLEDIIGGHVWLGSICILGGIWHILTKPFAWARRALVWSGEAYLSYSLGALAVFGFIACCFVWFNNTAYPSEFYGPTGPEASQAQAFTFLVRDQRLGANVGSAQGPTGLGKYLMRSPTGEVIFGGETMRFWDLRAPWLEPLRGPNGLDLSRLKKDIQPWQERRSAEYMTHAPLGSLNSVGGVATEINAVNYVSPRSWLATSHFVLGFFFFVGHLWHAGRARAAAAGFEKGIDRDFEPVLSMTPLN</sequence>
<protein>
    <recommendedName>
        <fullName evidence="1">Photosystem II CP43 reaction center protein</fullName>
    </recommendedName>
    <alternativeName>
        <fullName evidence="1">PSII 43 kDa protein</fullName>
    </alternativeName>
    <alternativeName>
        <fullName evidence="1">Protein CP-43</fullName>
    </alternativeName>
</protein>
<feature type="propeptide" id="PRO_0000431113" evidence="1">
    <location>
        <begin position="1"/>
        <end position="14"/>
    </location>
</feature>
<feature type="chain" id="PRO_0000361323" description="Photosystem II CP43 reaction center protein" evidence="1">
    <location>
        <begin position="15"/>
        <end position="473"/>
    </location>
</feature>
<feature type="transmembrane region" description="Helical" evidence="1">
    <location>
        <begin position="69"/>
        <end position="93"/>
    </location>
</feature>
<feature type="transmembrane region" description="Helical" evidence="1">
    <location>
        <begin position="134"/>
        <end position="155"/>
    </location>
</feature>
<feature type="transmembrane region" description="Helical" evidence="1">
    <location>
        <begin position="178"/>
        <end position="200"/>
    </location>
</feature>
<feature type="transmembrane region" description="Helical" evidence="1">
    <location>
        <begin position="255"/>
        <end position="275"/>
    </location>
</feature>
<feature type="transmembrane region" description="Helical" evidence="1">
    <location>
        <begin position="291"/>
        <end position="312"/>
    </location>
</feature>
<feature type="transmembrane region" description="Helical" evidence="1">
    <location>
        <begin position="447"/>
        <end position="471"/>
    </location>
</feature>
<feature type="binding site" evidence="1">
    <location>
        <position position="367"/>
    </location>
    <ligand>
        <name>[CaMn4O5] cluster</name>
        <dbReference type="ChEBI" id="CHEBI:189552"/>
    </ligand>
</feature>
<feature type="modified residue" description="N-acetylthreonine" evidence="1">
    <location>
        <position position="15"/>
    </location>
</feature>
<feature type="modified residue" description="Phosphothreonine" evidence="1">
    <location>
        <position position="15"/>
    </location>
</feature>
<organism>
    <name type="scientific">Atropa belladonna</name>
    <name type="common">Belladonna</name>
    <name type="synonym">Deadly nightshade</name>
    <dbReference type="NCBI Taxonomy" id="33113"/>
    <lineage>
        <taxon>Eukaryota</taxon>
        <taxon>Viridiplantae</taxon>
        <taxon>Streptophyta</taxon>
        <taxon>Embryophyta</taxon>
        <taxon>Tracheophyta</taxon>
        <taxon>Spermatophyta</taxon>
        <taxon>Magnoliopsida</taxon>
        <taxon>eudicotyledons</taxon>
        <taxon>Gunneridae</taxon>
        <taxon>Pentapetalae</taxon>
        <taxon>asterids</taxon>
        <taxon>lamiids</taxon>
        <taxon>Solanales</taxon>
        <taxon>Solanaceae</taxon>
        <taxon>Solanoideae</taxon>
        <taxon>Hyoscyameae</taxon>
        <taxon>Atropa</taxon>
    </lineage>
</organism>
<reference key="1">
    <citation type="journal article" date="2002" name="Mol. Biol. Evol.">
        <title>The plastid chromosome of Atropa belladonna and its comparison with that of Nicotiana tabacum: the role of RNA editing in generating divergence in the process of plant speciation.</title>
        <authorList>
            <person name="Schmitz-Linneweber C."/>
            <person name="Regel R."/>
            <person name="Du T.G."/>
            <person name="Hupfer H."/>
            <person name="Herrmann R.G."/>
            <person name="Maier R.M."/>
        </authorList>
    </citation>
    <scope>NUCLEOTIDE SEQUENCE [LARGE SCALE GENOMIC DNA]</scope>
    <source>
        <strain>cv. Ab5p(kan)</strain>
    </source>
</reference>
<geneLocation type="chloroplast"/>
<comment type="function">
    <text evidence="1">One of the components of the core complex of photosystem II (PSII). It binds chlorophyll and helps catalyze the primary light-induced photochemical processes of PSII. PSII is a light-driven water:plastoquinone oxidoreductase, using light energy to abstract electrons from H(2)O, generating O(2) and a proton gradient subsequently used for ATP formation.</text>
</comment>
<comment type="cofactor">
    <text evidence="1">Binds multiple chlorophylls and provides some of the ligands for the Ca-4Mn-5O cluster of the oxygen-evolving complex. It may also provide a ligand for a Cl- that is required for oxygen evolution. PSII binds additional chlorophylls, carotenoids and specific lipids.</text>
</comment>
<comment type="subunit">
    <text evidence="1">PSII is composed of 1 copy each of membrane proteins PsbA, PsbB, PsbC, PsbD, PsbE, PsbF, PsbH, PsbI, PsbJ, PsbK, PsbL, PsbM, PsbT, PsbX, PsbY, PsbZ, Psb30/Ycf12, at least 3 peripheral proteins of the oxygen-evolving complex and a large number of cofactors. It forms dimeric complexes.</text>
</comment>
<comment type="subcellular location">
    <subcellularLocation>
        <location evidence="1">Plastid</location>
        <location evidence="1">Chloroplast thylakoid membrane</location>
        <topology evidence="1">Multi-pass membrane protein</topology>
    </subcellularLocation>
</comment>
<comment type="similarity">
    <text evidence="1">Belongs to the PsbB/PsbC family. PsbC subfamily.</text>
</comment>
<keyword id="KW-0007">Acetylation</keyword>
<keyword id="KW-0148">Chlorophyll</keyword>
<keyword id="KW-0150">Chloroplast</keyword>
<keyword id="KW-0157">Chromophore</keyword>
<keyword id="KW-0464">Manganese</keyword>
<keyword id="KW-0472">Membrane</keyword>
<keyword id="KW-0479">Metal-binding</keyword>
<keyword id="KW-0597">Phosphoprotein</keyword>
<keyword id="KW-0602">Photosynthesis</keyword>
<keyword id="KW-0604">Photosystem II</keyword>
<keyword id="KW-0934">Plastid</keyword>
<keyword id="KW-0793">Thylakoid</keyword>
<keyword id="KW-0812">Transmembrane</keyword>
<keyword id="KW-1133">Transmembrane helix</keyword>
<name>PSBC_ATRBE</name>
<gene>
    <name evidence="1" type="primary">psbC</name>
</gene>
<accession>Q8S8X7</accession>
<evidence type="ECO:0000255" key="1">
    <source>
        <dbReference type="HAMAP-Rule" id="MF_01496"/>
    </source>
</evidence>
<dbReference type="EMBL" id="AJ316582">
    <property type="protein sequence ID" value="CAC88040.1"/>
    <property type="molecule type" value="Genomic_DNA"/>
</dbReference>
<dbReference type="RefSeq" id="NP_783228.1">
    <property type="nucleotide sequence ID" value="NC_004561.1"/>
</dbReference>
<dbReference type="SMR" id="Q8S8X7"/>
<dbReference type="GeneID" id="806461"/>
<dbReference type="GO" id="GO:0009535">
    <property type="term" value="C:chloroplast thylakoid membrane"/>
    <property type="evidence" value="ECO:0007669"/>
    <property type="project" value="UniProtKB-SubCell"/>
</dbReference>
<dbReference type="GO" id="GO:0009523">
    <property type="term" value="C:photosystem II"/>
    <property type="evidence" value="ECO:0007669"/>
    <property type="project" value="UniProtKB-KW"/>
</dbReference>
<dbReference type="GO" id="GO:0016168">
    <property type="term" value="F:chlorophyll binding"/>
    <property type="evidence" value="ECO:0007669"/>
    <property type="project" value="UniProtKB-UniRule"/>
</dbReference>
<dbReference type="GO" id="GO:0045156">
    <property type="term" value="F:electron transporter, transferring electrons within the cyclic electron transport pathway of photosynthesis activity"/>
    <property type="evidence" value="ECO:0007669"/>
    <property type="project" value="InterPro"/>
</dbReference>
<dbReference type="GO" id="GO:0046872">
    <property type="term" value="F:metal ion binding"/>
    <property type="evidence" value="ECO:0007669"/>
    <property type="project" value="UniProtKB-KW"/>
</dbReference>
<dbReference type="GO" id="GO:0009772">
    <property type="term" value="P:photosynthetic electron transport in photosystem II"/>
    <property type="evidence" value="ECO:0007669"/>
    <property type="project" value="InterPro"/>
</dbReference>
<dbReference type="FunFam" id="1.10.10.670:FF:000001">
    <property type="entry name" value="Photosystem II CP43 reaction center protein"/>
    <property type="match status" value="1"/>
</dbReference>
<dbReference type="Gene3D" id="1.10.10.670">
    <property type="entry name" value="photosystem ii from thermosynechococcus elongatus"/>
    <property type="match status" value="1"/>
</dbReference>
<dbReference type="HAMAP" id="MF_01496">
    <property type="entry name" value="PSII_PsbC_CP43"/>
    <property type="match status" value="1"/>
</dbReference>
<dbReference type="InterPro" id="IPR000932">
    <property type="entry name" value="PS_antenna-like"/>
</dbReference>
<dbReference type="InterPro" id="IPR036001">
    <property type="entry name" value="PS_II_antenna-like_sf"/>
</dbReference>
<dbReference type="InterPro" id="IPR005869">
    <property type="entry name" value="PSII_PsbC"/>
</dbReference>
<dbReference type="InterPro" id="IPR044900">
    <property type="entry name" value="PSII_PsbC_sf"/>
</dbReference>
<dbReference type="NCBIfam" id="TIGR01153">
    <property type="entry name" value="psbC"/>
    <property type="match status" value="1"/>
</dbReference>
<dbReference type="Pfam" id="PF00421">
    <property type="entry name" value="PSII"/>
    <property type="match status" value="1"/>
</dbReference>
<dbReference type="SUPFAM" id="SSF161077">
    <property type="entry name" value="Photosystem II antenna protein-like"/>
    <property type="match status" value="1"/>
</dbReference>
<proteinExistence type="inferred from homology"/>